<comment type="function">
    <text evidence="1">Catalyzes the oxidation of 5,10-methylenetetrahydrofolate to 5,10-methenyltetrahydrofolate and then the hydrolysis of 5,10-methenyltetrahydrofolate to 10-formyltetrahydrofolate.</text>
</comment>
<comment type="catalytic activity">
    <reaction evidence="1">
        <text>(6R)-5,10-methylene-5,6,7,8-tetrahydrofolate + NADP(+) = (6R)-5,10-methenyltetrahydrofolate + NADPH</text>
        <dbReference type="Rhea" id="RHEA:22812"/>
        <dbReference type="ChEBI" id="CHEBI:15636"/>
        <dbReference type="ChEBI" id="CHEBI:57455"/>
        <dbReference type="ChEBI" id="CHEBI:57783"/>
        <dbReference type="ChEBI" id="CHEBI:58349"/>
        <dbReference type="EC" id="1.5.1.5"/>
    </reaction>
</comment>
<comment type="catalytic activity">
    <reaction evidence="1">
        <text>(6R)-5,10-methenyltetrahydrofolate + H2O = (6R)-10-formyltetrahydrofolate + H(+)</text>
        <dbReference type="Rhea" id="RHEA:23700"/>
        <dbReference type="ChEBI" id="CHEBI:15377"/>
        <dbReference type="ChEBI" id="CHEBI:15378"/>
        <dbReference type="ChEBI" id="CHEBI:57455"/>
        <dbReference type="ChEBI" id="CHEBI:195366"/>
        <dbReference type="EC" id="3.5.4.9"/>
    </reaction>
</comment>
<comment type="pathway">
    <text evidence="1">One-carbon metabolism; tetrahydrofolate interconversion.</text>
</comment>
<comment type="subunit">
    <text evidence="1">Homodimer.</text>
</comment>
<comment type="similarity">
    <text evidence="1">Belongs to the tetrahydrofolate dehydrogenase/cyclohydrolase family.</text>
</comment>
<sequence length="284" mass="30821">MSANILDGKAIAANIRRNIKKRVQERITAGLRPPGLAVILLGSDPASQVYVRNKRRACEEVGFKSLAYDLPADTTQANLLALIDQLNADSTVDGILVQLPLGGHIDAEQVIEQIRPDKDVDGFHPYNIGRLTLRLPLLRPCTPHGVITLLRTTGQDLRGLEAVVVGASNIVGRPMMLELLLAGCTVTICHRWTRDLHKPISEADIVVAAVGKPHLIQGKWIKPGATVIDVGFTRQPDGTLTGDVEFESARQRALWITPVPGGVGPMTIATLLQNTLYATEKLHE</sequence>
<keyword id="KW-0028">Amino-acid biosynthesis</keyword>
<keyword id="KW-0368">Histidine biosynthesis</keyword>
<keyword id="KW-0378">Hydrolase</keyword>
<keyword id="KW-0486">Methionine biosynthesis</keyword>
<keyword id="KW-0511">Multifunctional enzyme</keyword>
<keyword id="KW-0521">NADP</keyword>
<keyword id="KW-0554">One-carbon metabolism</keyword>
<keyword id="KW-0560">Oxidoreductase</keyword>
<keyword id="KW-0658">Purine biosynthesis</keyword>
<keyword id="KW-1185">Reference proteome</keyword>
<evidence type="ECO:0000255" key="1">
    <source>
        <dbReference type="HAMAP-Rule" id="MF_01576"/>
    </source>
</evidence>
<proteinExistence type="inferred from homology"/>
<dbReference type="EC" id="1.5.1.5" evidence="1"/>
<dbReference type="EC" id="3.5.4.9" evidence="1"/>
<dbReference type="EMBL" id="CP000127">
    <property type="protein sequence ID" value="ABA58706.1"/>
    <property type="molecule type" value="Genomic_DNA"/>
</dbReference>
<dbReference type="RefSeq" id="WP_002810507.1">
    <property type="nucleotide sequence ID" value="NC_007484.1"/>
</dbReference>
<dbReference type="SMR" id="Q3J8Z0"/>
<dbReference type="FunCoup" id="Q3J8Z0">
    <property type="interactions" value="513"/>
</dbReference>
<dbReference type="STRING" id="323261.Noc_2248"/>
<dbReference type="KEGG" id="noc:Noc_2248"/>
<dbReference type="eggNOG" id="COG0190">
    <property type="taxonomic scope" value="Bacteria"/>
</dbReference>
<dbReference type="HOGENOM" id="CLU_034045_2_1_6"/>
<dbReference type="InParanoid" id="Q3J8Z0"/>
<dbReference type="UniPathway" id="UPA00193"/>
<dbReference type="Proteomes" id="UP000006838">
    <property type="component" value="Chromosome"/>
</dbReference>
<dbReference type="GO" id="GO:0005829">
    <property type="term" value="C:cytosol"/>
    <property type="evidence" value="ECO:0007669"/>
    <property type="project" value="TreeGrafter"/>
</dbReference>
<dbReference type="GO" id="GO:0004477">
    <property type="term" value="F:methenyltetrahydrofolate cyclohydrolase activity"/>
    <property type="evidence" value="ECO:0007669"/>
    <property type="project" value="UniProtKB-UniRule"/>
</dbReference>
<dbReference type="GO" id="GO:0004488">
    <property type="term" value="F:methylenetetrahydrofolate dehydrogenase (NADP+) activity"/>
    <property type="evidence" value="ECO:0007669"/>
    <property type="project" value="UniProtKB-UniRule"/>
</dbReference>
<dbReference type="GO" id="GO:0000105">
    <property type="term" value="P:L-histidine biosynthetic process"/>
    <property type="evidence" value="ECO:0007669"/>
    <property type="project" value="UniProtKB-KW"/>
</dbReference>
<dbReference type="GO" id="GO:0009086">
    <property type="term" value="P:methionine biosynthetic process"/>
    <property type="evidence" value="ECO:0007669"/>
    <property type="project" value="UniProtKB-KW"/>
</dbReference>
<dbReference type="GO" id="GO:0006164">
    <property type="term" value="P:purine nucleotide biosynthetic process"/>
    <property type="evidence" value="ECO:0007669"/>
    <property type="project" value="UniProtKB-KW"/>
</dbReference>
<dbReference type="GO" id="GO:0035999">
    <property type="term" value="P:tetrahydrofolate interconversion"/>
    <property type="evidence" value="ECO:0007669"/>
    <property type="project" value="UniProtKB-UniRule"/>
</dbReference>
<dbReference type="CDD" id="cd01080">
    <property type="entry name" value="NAD_bind_m-THF_DH_Cyclohyd"/>
    <property type="match status" value="1"/>
</dbReference>
<dbReference type="FunFam" id="3.40.50.10860:FF:000001">
    <property type="entry name" value="Bifunctional protein FolD"/>
    <property type="match status" value="1"/>
</dbReference>
<dbReference type="FunFam" id="3.40.50.720:FF:000006">
    <property type="entry name" value="Bifunctional protein FolD"/>
    <property type="match status" value="1"/>
</dbReference>
<dbReference type="Gene3D" id="3.40.50.10860">
    <property type="entry name" value="Leucine Dehydrogenase, chain A, domain 1"/>
    <property type="match status" value="1"/>
</dbReference>
<dbReference type="Gene3D" id="3.40.50.720">
    <property type="entry name" value="NAD(P)-binding Rossmann-like Domain"/>
    <property type="match status" value="1"/>
</dbReference>
<dbReference type="HAMAP" id="MF_01576">
    <property type="entry name" value="THF_DHG_CYH"/>
    <property type="match status" value="1"/>
</dbReference>
<dbReference type="InterPro" id="IPR046346">
    <property type="entry name" value="Aminoacid_DH-like_N_sf"/>
</dbReference>
<dbReference type="InterPro" id="IPR036291">
    <property type="entry name" value="NAD(P)-bd_dom_sf"/>
</dbReference>
<dbReference type="InterPro" id="IPR000672">
    <property type="entry name" value="THF_DH/CycHdrlase"/>
</dbReference>
<dbReference type="InterPro" id="IPR020630">
    <property type="entry name" value="THF_DH/CycHdrlase_cat_dom"/>
</dbReference>
<dbReference type="InterPro" id="IPR020867">
    <property type="entry name" value="THF_DH/CycHdrlase_CS"/>
</dbReference>
<dbReference type="InterPro" id="IPR020631">
    <property type="entry name" value="THF_DH/CycHdrlase_NAD-bd_dom"/>
</dbReference>
<dbReference type="NCBIfam" id="NF008058">
    <property type="entry name" value="PRK10792.1"/>
    <property type="match status" value="1"/>
</dbReference>
<dbReference type="NCBIfam" id="NF010783">
    <property type="entry name" value="PRK14186.1"/>
    <property type="match status" value="1"/>
</dbReference>
<dbReference type="PANTHER" id="PTHR48099:SF5">
    <property type="entry name" value="C-1-TETRAHYDROFOLATE SYNTHASE, CYTOPLASMIC"/>
    <property type="match status" value="1"/>
</dbReference>
<dbReference type="PANTHER" id="PTHR48099">
    <property type="entry name" value="C-1-TETRAHYDROFOLATE SYNTHASE, CYTOPLASMIC-RELATED"/>
    <property type="match status" value="1"/>
</dbReference>
<dbReference type="Pfam" id="PF00763">
    <property type="entry name" value="THF_DHG_CYH"/>
    <property type="match status" value="1"/>
</dbReference>
<dbReference type="Pfam" id="PF02882">
    <property type="entry name" value="THF_DHG_CYH_C"/>
    <property type="match status" value="1"/>
</dbReference>
<dbReference type="PRINTS" id="PR00085">
    <property type="entry name" value="THFDHDRGNASE"/>
</dbReference>
<dbReference type="SUPFAM" id="SSF53223">
    <property type="entry name" value="Aminoacid dehydrogenase-like, N-terminal domain"/>
    <property type="match status" value="1"/>
</dbReference>
<dbReference type="SUPFAM" id="SSF51735">
    <property type="entry name" value="NAD(P)-binding Rossmann-fold domains"/>
    <property type="match status" value="1"/>
</dbReference>
<dbReference type="PROSITE" id="PS00767">
    <property type="entry name" value="THF_DHG_CYH_2"/>
    <property type="match status" value="1"/>
</dbReference>
<feature type="chain" id="PRO_0000268420" description="Bifunctional protein FolD">
    <location>
        <begin position="1"/>
        <end position="284"/>
    </location>
</feature>
<feature type="binding site" evidence="1">
    <location>
        <begin position="166"/>
        <end position="168"/>
    </location>
    <ligand>
        <name>NADP(+)</name>
        <dbReference type="ChEBI" id="CHEBI:58349"/>
    </ligand>
</feature>
<protein>
    <recommendedName>
        <fullName evidence="1">Bifunctional protein FolD</fullName>
    </recommendedName>
    <domain>
        <recommendedName>
            <fullName evidence="1">Methylenetetrahydrofolate dehydrogenase</fullName>
            <ecNumber evidence="1">1.5.1.5</ecNumber>
        </recommendedName>
    </domain>
    <domain>
        <recommendedName>
            <fullName evidence="1">Methenyltetrahydrofolate cyclohydrolase</fullName>
            <ecNumber evidence="1">3.5.4.9</ecNumber>
        </recommendedName>
    </domain>
</protein>
<accession>Q3J8Z0</accession>
<name>FOLD_NITOC</name>
<gene>
    <name evidence="1" type="primary">folD</name>
    <name type="ordered locus">Noc_2248</name>
</gene>
<reference key="1">
    <citation type="journal article" date="2006" name="Appl. Environ. Microbiol.">
        <title>Complete genome sequence of the marine, chemolithoautotrophic, ammonia-oxidizing bacterium Nitrosococcus oceani ATCC 19707.</title>
        <authorList>
            <person name="Klotz M.G."/>
            <person name="Arp D.J."/>
            <person name="Chain P.S.G."/>
            <person name="El-Sheikh A.F."/>
            <person name="Hauser L.J."/>
            <person name="Hommes N.G."/>
            <person name="Larimer F.W."/>
            <person name="Malfatti S.A."/>
            <person name="Norton J.M."/>
            <person name="Poret-Peterson A.T."/>
            <person name="Vergez L.M."/>
            <person name="Ward B.B."/>
        </authorList>
    </citation>
    <scope>NUCLEOTIDE SEQUENCE [LARGE SCALE GENOMIC DNA]</scope>
    <source>
        <strain>ATCC 19707 / BCRC 17464 / JCM 30415 / NCIMB 11848 / C-107</strain>
    </source>
</reference>
<organism>
    <name type="scientific">Nitrosococcus oceani (strain ATCC 19707 / BCRC 17464 / JCM 30415 / NCIMB 11848 / C-107)</name>
    <dbReference type="NCBI Taxonomy" id="323261"/>
    <lineage>
        <taxon>Bacteria</taxon>
        <taxon>Pseudomonadati</taxon>
        <taxon>Pseudomonadota</taxon>
        <taxon>Gammaproteobacteria</taxon>
        <taxon>Chromatiales</taxon>
        <taxon>Chromatiaceae</taxon>
        <taxon>Nitrosococcus</taxon>
    </lineage>
</organism>